<organism>
    <name type="scientific">Rhodococcoides fascians</name>
    <name type="common">Rhodococcus fascians</name>
    <dbReference type="NCBI Taxonomy" id="1828"/>
    <lineage>
        <taxon>Bacteria</taxon>
        <taxon>Bacillati</taxon>
        <taxon>Actinomycetota</taxon>
        <taxon>Actinomycetes</taxon>
        <taxon>Mycobacteriales</taxon>
        <taxon>Nocardiaceae</taxon>
        <taxon>Rhodococcoides</taxon>
    </lineage>
</organism>
<gene>
    <name type="primary">fas5</name>
</gene>
<dbReference type="EMBL" id="Z29635">
    <property type="protein sequence ID" value="CAA82745.1"/>
    <property type="molecule type" value="Genomic_DNA"/>
</dbReference>
<dbReference type="PIR" id="E55578">
    <property type="entry name" value="E55578"/>
</dbReference>
<dbReference type="RefSeq" id="YP_007878708.1">
    <property type="nucleotide sequence ID" value="NC_021080.1"/>
</dbReference>
<dbReference type="SMR" id="P46377"/>
<dbReference type="STRING" id="1443905.GCA_000761075_00036"/>
<dbReference type="GO" id="GO:0019139">
    <property type="term" value="F:cytokinin dehydrogenase activity"/>
    <property type="evidence" value="ECO:0007669"/>
    <property type="project" value="InterPro"/>
</dbReference>
<dbReference type="GO" id="GO:0071949">
    <property type="term" value="F:FAD binding"/>
    <property type="evidence" value="ECO:0007669"/>
    <property type="project" value="InterPro"/>
</dbReference>
<dbReference type="GO" id="GO:0009690">
    <property type="term" value="P:cytokinin metabolic process"/>
    <property type="evidence" value="ECO:0007669"/>
    <property type="project" value="InterPro"/>
</dbReference>
<dbReference type="Gene3D" id="3.30.465.10">
    <property type="match status" value="1"/>
</dbReference>
<dbReference type="Gene3D" id="3.40.462.10">
    <property type="entry name" value="FAD-linked oxidases, C-terminal domain"/>
    <property type="match status" value="1"/>
</dbReference>
<dbReference type="Gene3D" id="3.30.43.10">
    <property type="entry name" value="Uridine Diphospho-n-acetylenolpyruvylglucosamine Reductase, domain 2"/>
    <property type="match status" value="1"/>
</dbReference>
<dbReference type="InterPro" id="IPR016170">
    <property type="entry name" value="Cytok_DH_C_sf"/>
</dbReference>
<dbReference type="InterPro" id="IPR015345">
    <property type="entry name" value="Cytokinin_DH_FAD/cytokin-bd"/>
</dbReference>
<dbReference type="InterPro" id="IPR016166">
    <property type="entry name" value="FAD-bd_PCMH"/>
</dbReference>
<dbReference type="InterPro" id="IPR036318">
    <property type="entry name" value="FAD-bd_PCMH-like_sf"/>
</dbReference>
<dbReference type="InterPro" id="IPR016167">
    <property type="entry name" value="FAD-bd_PCMH_sub1"/>
</dbReference>
<dbReference type="InterPro" id="IPR016169">
    <property type="entry name" value="FAD-bd_PCMH_sub2"/>
</dbReference>
<dbReference type="InterPro" id="IPR016164">
    <property type="entry name" value="FAD-linked_Oxase-like_C"/>
</dbReference>
<dbReference type="InterPro" id="IPR050432">
    <property type="entry name" value="FAD-linked_Oxidoreductases_BP"/>
</dbReference>
<dbReference type="InterPro" id="IPR006094">
    <property type="entry name" value="Oxid_FAD_bind_N"/>
</dbReference>
<dbReference type="InterPro" id="IPR006093">
    <property type="entry name" value="Oxy_OxRdtase_FAD_BS"/>
</dbReference>
<dbReference type="PANTHER" id="PTHR13878:SF53">
    <property type="entry name" value="CYTOKININ DEHYDROGENASE 6"/>
    <property type="match status" value="1"/>
</dbReference>
<dbReference type="PANTHER" id="PTHR13878">
    <property type="entry name" value="GULONOLACTONE OXIDASE"/>
    <property type="match status" value="1"/>
</dbReference>
<dbReference type="Pfam" id="PF09265">
    <property type="entry name" value="Cytokin-bind"/>
    <property type="match status" value="1"/>
</dbReference>
<dbReference type="Pfam" id="PF01565">
    <property type="entry name" value="FAD_binding_4"/>
    <property type="match status" value="1"/>
</dbReference>
<dbReference type="SUPFAM" id="SSF56176">
    <property type="entry name" value="FAD-binding/transporter-associated domain-like"/>
    <property type="match status" value="1"/>
</dbReference>
<dbReference type="SUPFAM" id="SSF55103">
    <property type="entry name" value="FAD-linked oxidases, C-terminal domain"/>
    <property type="match status" value="1"/>
</dbReference>
<dbReference type="PROSITE" id="PS51387">
    <property type="entry name" value="FAD_PCMH"/>
    <property type="match status" value="1"/>
</dbReference>
<dbReference type="PROSITE" id="PS00862">
    <property type="entry name" value="OX2_COVAL_FAD"/>
    <property type="match status" value="1"/>
</dbReference>
<reference key="1">
    <citation type="journal article" date="1994" name="J. Bacteriol.">
        <title>The fas operon of Rhodococcus fascians encodes new genes required for efficient fasciation of host plants.</title>
        <authorList>
            <person name="Crespi M."/>
            <person name="Vereecke D."/>
            <person name="Temmerman W."/>
            <person name="van Montagu M."/>
            <person name="Desomer J."/>
        </authorList>
    </citation>
    <scope>NUCLEOTIDE SEQUENCE [GENOMIC DNA]</scope>
    <source>
        <strain>D188</strain>
    </source>
</reference>
<keyword id="KW-0274">FAD</keyword>
<keyword id="KW-0285">Flavoprotein</keyword>
<keyword id="KW-0560">Oxidoreductase</keyword>
<keyword id="KW-0614">Plasmid</keyword>
<name>FAS5_RHOFA</name>
<feature type="chain" id="PRO_0000128172" description="Uncharacterized oxidoreductase ORF5 in fasciation locus">
    <location>
        <begin position="1"/>
        <end position="438"/>
    </location>
</feature>
<feature type="domain" description="FAD-binding PCMH-type" evidence="2">
    <location>
        <begin position="23"/>
        <end position="193"/>
    </location>
</feature>
<feature type="binding site" evidence="1">
    <location>
        <begin position="55"/>
        <end position="59"/>
    </location>
    <ligand>
        <name>FAD</name>
        <dbReference type="ChEBI" id="CHEBI:57692"/>
    </ligand>
</feature>
<feature type="binding site" evidence="1">
    <location>
        <begin position="60"/>
        <end position="61"/>
    </location>
    <ligand>
        <name>FAD</name>
        <dbReference type="ChEBI" id="CHEBI:57692"/>
    </ligand>
</feature>
<feature type="binding site" evidence="1">
    <location>
        <position position="65"/>
    </location>
    <ligand>
        <name>FAD</name>
        <dbReference type="ChEBI" id="CHEBI:57692"/>
    </ligand>
</feature>
<feature type="binding site" evidence="1">
    <location>
        <position position="117"/>
    </location>
    <ligand>
        <name>FAD</name>
        <dbReference type="ChEBI" id="CHEBI:57692"/>
    </ligand>
</feature>
<feature type="binding site" evidence="1">
    <location>
        <position position="122"/>
    </location>
    <ligand>
        <name>FAD</name>
        <dbReference type="ChEBI" id="CHEBI:57692"/>
    </ligand>
</feature>
<feature type="binding site" evidence="1">
    <location>
        <begin position="128"/>
        <end position="132"/>
    </location>
    <ligand>
        <name>FAD</name>
        <dbReference type="ChEBI" id="CHEBI:57692"/>
    </ligand>
</feature>
<feature type="binding site" evidence="1">
    <location>
        <position position="183"/>
    </location>
    <ligand>
        <name>FAD</name>
        <dbReference type="ChEBI" id="CHEBI:57692"/>
    </ligand>
</feature>
<feature type="binding site" evidence="1">
    <location>
        <position position="393"/>
    </location>
    <ligand>
        <name>FAD</name>
        <dbReference type="ChEBI" id="CHEBI:57692"/>
    </ligand>
</feature>
<feature type="binding site" evidence="1">
    <location>
        <begin position="430"/>
        <end position="433"/>
    </location>
    <ligand>
        <name>FAD</name>
        <dbReference type="ChEBI" id="CHEBI:57692"/>
    </ligand>
</feature>
<feature type="modified residue" description="Pros-8alpha-FAD histidine" evidence="1">
    <location>
        <position position="60"/>
    </location>
</feature>
<proteinExistence type="evidence at transcript level"/>
<protein>
    <recommendedName>
        <fullName>Uncharacterized oxidoreductase ORF5 in fasciation locus</fullName>
    </recommendedName>
</protein>
<geneLocation type="plasmid">
    <name>pFiD188</name>
</geneLocation>
<evidence type="ECO:0000250" key="1"/>
<evidence type="ECO:0000255" key="2">
    <source>
        <dbReference type="PROSITE-ProRule" id="PRU00718"/>
    </source>
</evidence>
<evidence type="ECO:0000305" key="3"/>
<accession>P46377</accession>
<comment type="function">
    <text>The FAS-operon encodes genes involved in cytokinin production and in host plant fasciation (leafy gall).</text>
</comment>
<comment type="cofactor">
    <cofactor evidence="3">
        <name>FAD</name>
        <dbReference type="ChEBI" id="CHEBI:57692"/>
    </cofactor>
</comment>
<comment type="induction">
    <text>During the interaction with host plants.</text>
</comment>
<comment type="similarity">
    <text evidence="3">Belongs to the oxygen-dependent FAD-linked oxidoreductase family.</text>
</comment>
<sequence length="438" mass="47890">MSGIWHTDDVHLTSAGADFGNCIHAKPPVVVVPRTVADVQEALRYTAARNLSLAVRGSGHSTYGQCQADGGVVLDMKRFNTVHDVRSGQATIDAGVRWSDVVAATLSRQQTPPVLTDYLGTTVGGTLSVGGFGGSSHGFGLQTDNVDSLAVVTGSGDFRECSAVSNSELFDAVRGGLGQFGVIVNATIRLTAAHESVRQYKLQYSNLGVFLGDQLRAMSNRLFDHVQGRIRVDADGHLRYRLDLAKYFTPPRRPDDDALLSSLQYDSCAEYNSDVDYGDFINRMADQELDLRHTGEWFYPHPWASLLIPADKIEQFIETTSSSLTDDLGNSGLIMVYPIPTTPITAPFIPIPHCDTFFMLAVLRTASPGAEARMIASNRLLYEQARDVGGVAYAVNAVPMSPGDWCTHFGSRWQAIARAKRRFDPYRILAPGYRMSFD</sequence>